<evidence type="ECO:0000250" key="1">
    <source>
        <dbReference type="UniProtKB" id="P95649"/>
    </source>
</evidence>
<evidence type="ECO:0000269" key="2">
    <source>
    </source>
</evidence>
<evidence type="ECO:0000303" key="3">
    <source>
    </source>
</evidence>
<evidence type="ECO:0000305" key="4"/>
<evidence type="ECO:0000312" key="5">
    <source>
        <dbReference type="EMBL" id="AAK99861.1"/>
    </source>
</evidence>
<evidence type="ECO:0000312" key="6">
    <source>
        <dbReference type="Proteomes" id="UP000000586"/>
    </source>
</evidence>
<reference evidence="5 6" key="1">
    <citation type="journal article" date="2001" name="J. Bacteriol.">
        <title>Genome of the bacterium Streptococcus pneumoniae strain R6.</title>
        <authorList>
            <person name="Hoskins J."/>
            <person name="Alborn W.E. Jr."/>
            <person name="Arnold J."/>
            <person name="Blaszczak L.C."/>
            <person name="Burgett S."/>
            <person name="DeHoff B.S."/>
            <person name="Estrem S.T."/>
            <person name="Fritz L."/>
            <person name="Fu D.-J."/>
            <person name="Fuller W."/>
            <person name="Geringer C."/>
            <person name="Gilmour R."/>
            <person name="Glass J.S."/>
            <person name="Khoja H."/>
            <person name="Kraft A.R."/>
            <person name="Lagace R.E."/>
            <person name="LeBlanc D.J."/>
            <person name="Lee L.N."/>
            <person name="Lefkowitz E.J."/>
            <person name="Lu J."/>
            <person name="Matsushima P."/>
            <person name="McAhren S.M."/>
            <person name="McHenney M."/>
            <person name="McLeaster K."/>
            <person name="Mundy C.W."/>
            <person name="Nicas T.I."/>
            <person name="Norris F.H."/>
            <person name="O'Gara M."/>
            <person name="Peery R.B."/>
            <person name="Robertson G.T."/>
            <person name="Rockey P."/>
            <person name="Sun P.-M."/>
            <person name="Winkler M.E."/>
            <person name="Yang Y."/>
            <person name="Young-Bellido M."/>
            <person name="Zhao G."/>
            <person name="Zook C.A."/>
            <person name="Baltz R.H."/>
            <person name="Jaskunas S.R."/>
            <person name="Rosteck P.R. Jr."/>
            <person name="Skatrud P.L."/>
            <person name="Glass J.I."/>
        </authorList>
    </citation>
    <scope>NUCLEOTIDE SEQUENCE [LARGE SCALE GENOMIC DNA]</scope>
    <source>
        <strain evidence="6">ATCC BAA-255 / R6</strain>
    </source>
</reference>
<reference key="2">
    <citation type="journal article" date="2020" name="FEBS J.">
        <title>PynA is a pyrimidine 5'-nucleotidase that functions as an antimutator protein in Streptococcus pneumoniae.</title>
        <authorList>
            <person name="Ulrych A."/>
            <person name="Petrackova D."/>
            <person name="Goldova J."/>
            <person name="Buriankova K."/>
            <person name="Doubravova L."/>
            <person name="Branny P."/>
        </authorList>
    </citation>
    <scope>FUNCTION</scope>
    <scope>SUBSTRATE SPECIFICITY</scope>
    <scope>CATALYTIC ACTIVITY</scope>
    <scope>COFACTOR</scope>
    <scope>BIOPHYSICOCHEMICAL PROPERTIES</scope>
    <scope>SUBUNIT</scope>
    <scope>SUBCELLULAR LOCATION</scope>
    <scope>DISRUPTION PHENOTYPE</scope>
    <source>
        <strain evidence="3">Rx1</strain>
    </source>
</reference>
<dbReference type="EC" id="3.1.3.5" evidence="2"/>
<dbReference type="EMBL" id="AE007317">
    <property type="protein sequence ID" value="AAK99861.1"/>
    <property type="molecule type" value="Genomic_DNA"/>
</dbReference>
<dbReference type="PIR" id="A99004">
    <property type="entry name" value="A99004"/>
</dbReference>
<dbReference type="RefSeq" id="NP_358651.1">
    <property type="nucleotide sequence ID" value="NC_003098.1"/>
</dbReference>
<dbReference type="RefSeq" id="WP_000499433.1">
    <property type="nucleotide sequence ID" value="NC_003098.1"/>
</dbReference>
<dbReference type="SMR" id="Q8DPQ3"/>
<dbReference type="STRING" id="171101.spr1057"/>
<dbReference type="KEGG" id="spr:spr1057"/>
<dbReference type="PATRIC" id="fig|171101.6.peg.1149"/>
<dbReference type="eggNOG" id="COG1011">
    <property type="taxonomic scope" value="Bacteria"/>
</dbReference>
<dbReference type="HOGENOM" id="CLU_045011_8_1_9"/>
<dbReference type="Proteomes" id="UP000000586">
    <property type="component" value="Chromosome"/>
</dbReference>
<dbReference type="GO" id="GO:0005737">
    <property type="term" value="C:cytoplasm"/>
    <property type="evidence" value="ECO:0000314"/>
    <property type="project" value="UniProtKB"/>
</dbReference>
<dbReference type="GO" id="GO:0002953">
    <property type="term" value="F:5'-deoxynucleotidase activity"/>
    <property type="evidence" value="ECO:0000314"/>
    <property type="project" value="UniProtKB"/>
</dbReference>
<dbReference type="GO" id="GO:0008253">
    <property type="term" value="F:5'-nucleotidase activity"/>
    <property type="evidence" value="ECO:0000314"/>
    <property type="project" value="UniProtKB"/>
</dbReference>
<dbReference type="GO" id="GO:0000287">
    <property type="term" value="F:magnesium ion binding"/>
    <property type="evidence" value="ECO:0000250"/>
    <property type="project" value="UniProtKB"/>
</dbReference>
<dbReference type="GO" id="GO:0000166">
    <property type="term" value="F:nucleotide binding"/>
    <property type="evidence" value="ECO:0007669"/>
    <property type="project" value="UniProtKB-KW"/>
</dbReference>
<dbReference type="GO" id="GO:0042803">
    <property type="term" value="F:protein homodimerization activity"/>
    <property type="evidence" value="ECO:0000314"/>
    <property type="project" value="UniProtKB"/>
</dbReference>
<dbReference type="GO" id="GO:0009159">
    <property type="term" value="P:deoxyribonucleoside monophosphate catabolic process"/>
    <property type="evidence" value="ECO:0000314"/>
    <property type="project" value="UniProtKB"/>
</dbReference>
<dbReference type="GO" id="GO:0009222">
    <property type="term" value="P:pyrimidine ribonucleotide catabolic process"/>
    <property type="evidence" value="ECO:0000314"/>
    <property type="project" value="UniProtKB"/>
</dbReference>
<dbReference type="Gene3D" id="3.40.50.1000">
    <property type="entry name" value="HAD superfamily/HAD-like"/>
    <property type="match status" value="1"/>
</dbReference>
<dbReference type="Gene3D" id="1.10.150.240">
    <property type="entry name" value="Putative phosphatase, domain 2"/>
    <property type="match status" value="1"/>
</dbReference>
<dbReference type="InterPro" id="IPR036412">
    <property type="entry name" value="HAD-like_sf"/>
</dbReference>
<dbReference type="InterPro" id="IPR006439">
    <property type="entry name" value="HAD-SF_hydro_IA"/>
</dbReference>
<dbReference type="InterPro" id="IPR011951">
    <property type="entry name" value="HAD-SF_hydro_IA_YjjG/PynA"/>
</dbReference>
<dbReference type="InterPro" id="IPR041492">
    <property type="entry name" value="HAD_2"/>
</dbReference>
<dbReference type="InterPro" id="IPR023214">
    <property type="entry name" value="HAD_sf"/>
</dbReference>
<dbReference type="InterPro" id="IPR023198">
    <property type="entry name" value="PGP-like_dom2"/>
</dbReference>
<dbReference type="InterPro" id="IPR052550">
    <property type="entry name" value="Pyrimidine_5'-ntase_YjjG"/>
</dbReference>
<dbReference type="NCBIfam" id="TIGR01549">
    <property type="entry name" value="HAD-SF-IA-v1"/>
    <property type="match status" value="1"/>
</dbReference>
<dbReference type="NCBIfam" id="TIGR02254">
    <property type="entry name" value="YjjG_YfnB"/>
    <property type="match status" value="1"/>
</dbReference>
<dbReference type="PANTHER" id="PTHR47478">
    <property type="match status" value="1"/>
</dbReference>
<dbReference type="PANTHER" id="PTHR47478:SF1">
    <property type="entry name" value="PYRIMIDINE 5'-NUCLEOTIDASE YJJG"/>
    <property type="match status" value="1"/>
</dbReference>
<dbReference type="Pfam" id="PF13419">
    <property type="entry name" value="HAD_2"/>
    <property type="match status" value="1"/>
</dbReference>
<dbReference type="SFLD" id="SFLDG01129">
    <property type="entry name" value="C1.5:_HAD__Beta-PGM__Phosphata"/>
    <property type="match status" value="1"/>
</dbReference>
<dbReference type="SFLD" id="SFLDS00003">
    <property type="entry name" value="Haloacid_Dehalogenase"/>
    <property type="match status" value="1"/>
</dbReference>
<dbReference type="SUPFAM" id="SSF56784">
    <property type="entry name" value="HAD-like"/>
    <property type="match status" value="1"/>
</dbReference>
<gene>
    <name evidence="3" type="primary">pynA</name>
    <name evidence="5" type="ordered locus">spr1057</name>
</gene>
<comment type="function">
    <text evidence="2">Nucleotidase that shows high phosphatase activity toward non-canonical pyrimidine nucleotides and three canonical nucleoside 5'-monophosphates (UMP, dUMP and dTMP), and no activity against IMP, UDP, GMP, AMP, UTP or pNPP. Appears to function as a house-cleaning nucleotidase in vivo, since the general nucleotidase activity of it allows it to protect cells against non-canonical pyrimidine derivatives such as 5-fluoro-2'-deoxyuridine monophosphate (5-FdUMP), and prevents the incorporation of potentially mutagenic nucleotides such as 5-bromo-2'-deoxyuridine (5-BrdU) into DNA. Is strictly specific to pyrimidine substrates with 5'-monophosphates and shows no activity against nucleoside di- and triphosphates.</text>
</comment>
<comment type="catalytic activity">
    <reaction evidence="2">
        <text>a ribonucleoside 5'-phosphate + H2O = a ribonucleoside + phosphate</text>
        <dbReference type="Rhea" id="RHEA:12484"/>
        <dbReference type="ChEBI" id="CHEBI:15377"/>
        <dbReference type="ChEBI" id="CHEBI:18254"/>
        <dbReference type="ChEBI" id="CHEBI:43474"/>
        <dbReference type="ChEBI" id="CHEBI:58043"/>
        <dbReference type="EC" id="3.1.3.5"/>
    </reaction>
</comment>
<comment type="cofactor">
    <cofactor evidence="2">
        <name>Mg(2+)</name>
        <dbReference type="ChEBI" id="CHEBI:18420"/>
    </cofactor>
    <cofactor evidence="2">
        <name>Mn(2+)</name>
        <dbReference type="ChEBI" id="CHEBI:29035"/>
    </cofactor>
    <text evidence="2">Strict requirement of divalent metal cation. The highest activity is observed with combination of Mg(2+) and Mn(2+), followed by Mg(2+) &gt; Mn(2+) &gt; Co(2+). No activity detected with Ca(2+), Cu(2+) or Zn(2+).</text>
</comment>
<comment type="biophysicochemical properties">
    <kinetics>
        <KM evidence="2">0.29 mM for 5-fluoro-2'-deoxyuridine monophosphate (5-FdUMP) (at pH 7.5 and 37 degrees Celsius)</KM>
        <KM evidence="2">2.6 mM for dTMP (at pH 7.5 and 37 degrees Celsius)</KM>
        <KM evidence="2">2.6 mM for UMP (at pH 7.5 and 37 degrees Celsius)</KM>
        <KM evidence="2">2.5 mM for dUMP (at pH 7.5 and 37 degrees Celsius)</KM>
        <Vmax evidence="2">16.7 umol/min/mg enzyme with 5-FdUMP as substrate (at pH 7.5 and 37 degrees Celsius)</Vmax>
        <Vmax evidence="2">15.1 umol/min/mg enzyme with dTMP as substrate (at pH 7.5 and 37 degrees Celsius)</Vmax>
        <Vmax evidence="2">6.4 umol/min/mg enzyme with UMP as substrate (at pH 7.5 and 37 degrees Celsius)</Vmax>
        <Vmax evidence="2">5.7 umol/min/mg enzyme with dUMP as substrate (at pH 7.5 and 37 degrees Celsius)</Vmax>
        <text evidence="2">kcat is 7.5 sec(-1) with 5-FdUMP as substrate (at pH 7.5 and 37 degrees Celsius). kcat is 6.8 sec(-1) with dTMP as substrate (at pH 7.5 and 37 degrees Celsius). kcat is 2.9 sec(-1) with UMP as substrate (at pH 7.5 and 37 degrees Celsius). kcat is 2.5 sec(-1) with dUMP as substrate (at pH 7.5 and 37 degrees Celsius). The catalytic efficiency is 10-fold higher with 5-FdUMP than with 5'-dTMP as substrate.</text>
    </kinetics>
    <phDependence>
        <text evidence="2">Optimum pH is 7.5.</text>
    </phDependence>
</comment>
<comment type="subunit">
    <text evidence="2">Homodimer.</text>
</comment>
<comment type="subcellular location">
    <subcellularLocation>
        <location evidence="2">Cytoplasm</location>
    </subcellularLocation>
</comment>
<comment type="disruption phenotype">
    <text evidence="2">Cells lacking this gene are viable, have normal growth and morphological appearance under standard cultivation conditions, but have high sensitivity to toxic non-canonical pyrimidine derivatives such as 5-fluoro-2'-deoxyuridine (5-FdU); the growth is completely blocked by 2 uM 5-FdU. Upon exposure to mutagenic agent 5-bromo-2'-deoxyuridine (5-BrdU), 5-BrdU is extensively incorporated into the DNA and results in accumulation of random mutations with high frequency, which affect growth or generation of lethal mutations in essential genes. A 30-fold increase in the mutation rate is observed. In the presence of 5-BrdU, the cells exhibit frequent morphological abnormalities, including irregular cell shape, heterogeneous cell size and the occurrence of cells undergoing lysis.</text>
</comment>
<comment type="similarity">
    <text evidence="4">Belongs to the HAD-like hydrolase superfamily. YjjG family.</text>
</comment>
<organism evidence="5">
    <name type="scientific">Streptococcus pneumoniae (strain ATCC BAA-255 / R6)</name>
    <dbReference type="NCBI Taxonomy" id="171101"/>
    <lineage>
        <taxon>Bacteria</taxon>
        <taxon>Bacillati</taxon>
        <taxon>Bacillota</taxon>
        <taxon>Bacilli</taxon>
        <taxon>Lactobacillales</taxon>
        <taxon>Streptococcaceae</taxon>
        <taxon>Streptococcus</taxon>
    </lineage>
</organism>
<accession>Q8DPQ3</accession>
<name>PYNA_STRR6</name>
<feature type="chain" id="PRO_0000452172" description="Pyrimidine 5'-nucleotidase PynA">
    <location>
        <begin position="1"/>
        <end position="237"/>
    </location>
</feature>
<feature type="active site" description="Nucleophile" evidence="1">
    <location>
        <position position="9"/>
    </location>
</feature>
<feature type="active site" description="Proton donor" evidence="1">
    <location>
        <position position="11"/>
    </location>
</feature>
<feature type="binding site" evidence="1">
    <location>
        <position position="9"/>
    </location>
    <ligand>
        <name>Mg(2+)</name>
        <dbReference type="ChEBI" id="CHEBI:18420"/>
    </ligand>
</feature>
<feature type="binding site" evidence="1">
    <location>
        <position position="11"/>
    </location>
    <ligand>
        <name>Mg(2+)</name>
        <dbReference type="ChEBI" id="CHEBI:18420"/>
    </ligand>
</feature>
<feature type="binding site" evidence="1">
    <location>
        <position position="181"/>
    </location>
    <ligand>
        <name>Mg(2+)</name>
        <dbReference type="ChEBI" id="CHEBI:18420"/>
    </ligand>
</feature>
<proteinExistence type="evidence at protein level"/>
<keyword id="KW-0963">Cytoplasm</keyword>
<keyword id="KW-0378">Hydrolase</keyword>
<keyword id="KW-0460">Magnesium</keyword>
<keyword id="KW-0464">Manganese</keyword>
<keyword id="KW-0479">Metal-binding</keyword>
<keyword id="KW-0547">Nucleotide-binding</keyword>
<keyword id="KW-1185">Reference proteome</keyword>
<protein>
    <recommendedName>
        <fullName evidence="3">Pyrimidine 5'-nucleotidase PynA</fullName>
        <ecNumber evidence="2">3.1.3.5</ecNumber>
    </recommendedName>
    <alternativeName>
        <fullName evidence="3">Antimutator protein PynA</fullName>
    </alternativeName>
    <alternativeName>
        <fullName evidence="3">House-cleaning nucleotidase</fullName>
    </alternativeName>
    <alternativeName>
        <fullName evidence="4">Non-canonical pyrimidine nucleotide phosphatase</fullName>
    </alternativeName>
    <alternativeName>
        <fullName evidence="4">Nucleoside 5'-monophosphate phosphohydrolase</fullName>
    </alternativeName>
    <alternativeName>
        <fullName evidence="3">Pyrimidine nucleotidase A</fullName>
    </alternativeName>
    <alternativeName>
        <fullName evidence="4">Ribonucleotide monophosphatase</fullName>
    </alternativeName>
</protein>
<sequence>MFYKFLLFDLDHTLLDFDAAEDVALTQLLKEEGVADIQAYKDYYVPMNKALWKDLELKKISKQELVNTRFSRLFSHFGQEKDGSFLAQRYQFYLAQQGQTLSGAHDLLDSLIERDYDLYAATNGITAIQTGRLAQSGLVPYFNQVFISEQLQTQKPDALFYEKIGQQIAGFSKEKTLMIGDSLTADIQGGNNAGIDTIWYNPHHLENHTQAQPTYEVYSYQDLLDCLDKNILEKITF</sequence>